<evidence type="ECO:0000250" key="1"/>
<evidence type="ECO:0000269" key="2">
    <source>
    </source>
</evidence>
<evidence type="ECO:0000269" key="3">
    <source>
    </source>
</evidence>
<evidence type="ECO:0000303" key="4">
    <source>
    </source>
</evidence>
<evidence type="ECO:0000305" key="5"/>
<evidence type="ECO:0007744" key="6">
    <source>
        <dbReference type="PDB" id="2ZY2"/>
    </source>
</evidence>
<evidence type="ECO:0007829" key="7">
    <source>
        <dbReference type="PDB" id="2ZY2"/>
    </source>
</evidence>
<accession>Q53IZ1</accession>
<name>ASDP_PSESP</name>
<reference key="1">
    <citation type="journal article" date="2006" name="Appl. Microbiol. Biotechnol.">
        <title>Molecular cloning of the aspartate 4-decarboxylase gene from Pseudomonas sp. ATCC 19121 and characterization of the bifunctional recombinant enzyme.</title>
        <authorList>
            <person name="Wang N.C."/>
            <person name="Lee C.Y."/>
        </authorList>
    </citation>
    <scope>NUCLEOTIDE SEQUENCE [GENOMIC DNA]</scope>
    <scope>CATALYTIC ACTIVITY</scope>
    <scope>FUNCTION</scope>
    <scope>SUBUNIT</scope>
    <scope>ACTIVITY REGULATION</scope>
    <scope>BIOPHYSICOCHEMICAL PROPERTIES</scope>
    <source>
        <strain>ATCC 19121 / 618</strain>
    </source>
</reference>
<reference key="2">
    <citation type="journal article" date="2009" name="Structure">
        <title>Structure, assembly, and mechanism of a PLP-dependent dodecameric L-aspartate beta-decarboxylase.</title>
        <authorList>
            <person name="Chen H.J."/>
            <person name="Ko T.P."/>
            <person name="Lee C.Y."/>
            <person name="Wang N.C."/>
            <person name="Wang A.H."/>
        </authorList>
    </citation>
    <scope>X-RAY CRYSTALLOGRAPHY (3.30 ANGSTROMS) IN COMPLEX WITH PLP</scope>
    <scope>CATALYTIC ACTIVITY</scope>
    <scope>FUNCTION</scope>
    <scope>COFACTOR</scope>
    <scope>SUBUNIT</scope>
    <scope>MUTAGENESIS OF 67-SER--MET-69</scope>
    <source>
        <strain>ATCC 19121 / 618</strain>
    </source>
</reference>
<proteinExistence type="evidence at protein level"/>
<dbReference type="EC" id="2.6.1.1" evidence="2"/>
<dbReference type="EC" id="4.1.1.12" evidence="2 3"/>
<dbReference type="EMBL" id="AF506011">
    <property type="protein sequence ID" value="AAQ07948.1"/>
    <property type="molecule type" value="Genomic_DNA"/>
</dbReference>
<dbReference type="PDB" id="2ZY2">
    <property type="method" value="X-ray"/>
    <property type="resolution" value="3.30 A"/>
    <property type="chains" value="A=1-531"/>
</dbReference>
<dbReference type="PDBsum" id="2ZY2"/>
<dbReference type="SMR" id="Q53IZ1"/>
<dbReference type="DIP" id="DIP-48315N"/>
<dbReference type="BRENDA" id="4.1.1.12">
    <property type="organism ID" value="5085"/>
</dbReference>
<dbReference type="EvolutionaryTrace" id="Q53IZ1"/>
<dbReference type="GO" id="GO:0047688">
    <property type="term" value="F:aspartate 4-decarboxylase activity"/>
    <property type="evidence" value="ECO:0000314"/>
    <property type="project" value="UniProtKB"/>
</dbReference>
<dbReference type="GO" id="GO:0042802">
    <property type="term" value="F:identical protein binding"/>
    <property type="evidence" value="ECO:0000353"/>
    <property type="project" value="IntAct"/>
</dbReference>
<dbReference type="GO" id="GO:0004069">
    <property type="term" value="F:L-aspartate:2-oxoglutarate aminotransferase activity"/>
    <property type="evidence" value="ECO:0007669"/>
    <property type="project" value="UniProtKB-EC"/>
</dbReference>
<dbReference type="GO" id="GO:0030170">
    <property type="term" value="F:pyridoxal phosphate binding"/>
    <property type="evidence" value="ECO:0007669"/>
    <property type="project" value="InterPro"/>
</dbReference>
<dbReference type="GO" id="GO:0006523">
    <property type="term" value="P:alanine biosynthetic process"/>
    <property type="evidence" value="ECO:0000314"/>
    <property type="project" value="UniProtKB"/>
</dbReference>
<dbReference type="GO" id="GO:0006531">
    <property type="term" value="P:aspartate metabolic process"/>
    <property type="evidence" value="ECO:0000314"/>
    <property type="project" value="UniProtKB"/>
</dbReference>
<dbReference type="CDD" id="cd00609">
    <property type="entry name" value="AAT_like"/>
    <property type="match status" value="1"/>
</dbReference>
<dbReference type="FunFam" id="3.40.640.10:FF:000126">
    <property type="entry name" value="Aminotransferase"/>
    <property type="match status" value="1"/>
</dbReference>
<dbReference type="Gene3D" id="1.10.20.110">
    <property type="match status" value="1"/>
</dbReference>
<dbReference type="Gene3D" id="3.90.1150.10">
    <property type="entry name" value="Aspartate Aminotransferase, domain 1"/>
    <property type="match status" value="1"/>
</dbReference>
<dbReference type="Gene3D" id="3.40.640.10">
    <property type="entry name" value="Type I PLP-dependent aspartate aminotransferase-like (Major domain)"/>
    <property type="match status" value="1"/>
</dbReference>
<dbReference type="InterPro" id="IPR004839">
    <property type="entry name" value="Aminotransferase_I/II_large"/>
</dbReference>
<dbReference type="InterPro" id="IPR022518">
    <property type="entry name" value="Aspartate_4-decarboxylase"/>
</dbReference>
<dbReference type="InterPro" id="IPR050596">
    <property type="entry name" value="AspAT/PAT-like"/>
</dbReference>
<dbReference type="InterPro" id="IPR004838">
    <property type="entry name" value="NHTrfase_class1_PyrdxlP-BS"/>
</dbReference>
<dbReference type="InterPro" id="IPR015424">
    <property type="entry name" value="PyrdxlP-dep_Trfase"/>
</dbReference>
<dbReference type="InterPro" id="IPR015421">
    <property type="entry name" value="PyrdxlP-dep_Trfase_major"/>
</dbReference>
<dbReference type="InterPro" id="IPR015422">
    <property type="entry name" value="PyrdxlP-dep_Trfase_small"/>
</dbReference>
<dbReference type="NCBIfam" id="TIGR03801">
    <property type="entry name" value="asp_4_decarbox"/>
    <property type="match status" value="1"/>
</dbReference>
<dbReference type="NCBIfam" id="NF006755">
    <property type="entry name" value="PRK09275.1"/>
    <property type="match status" value="1"/>
</dbReference>
<dbReference type="PANTHER" id="PTHR46383">
    <property type="entry name" value="ASPARTATE AMINOTRANSFERASE"/>
    <property type="match status" value="1"/>
</dbReference>
<dbReference type="PANTHER" id="PTHR46383:SF1">
    <property type="entry name" value="ASPARTATE AMINOTRANSFERASE"/>
    <property type="match status" value="1"/>
</dbReference>
<dbReference type="Pfam" id="PF00155">
    <property type="entry name" value="Aminotran_1_2"/>
    <property type="match status" value="1"/>
</dbReference>
<dbReference type="SUPFAM" id="SSF53383">
    <property type="entry name" value="PLP-dependent transferases"/>
    <property type="match status" value="1"/>
</dbReference>
<dbReference type="PROSITE" id="PS00105">
    <property type="entry name" value="AA_TRANSFER_CLASS_1"/>
    <property type="match status" value="1"/>
</dbReference>
<protein>
    <recommendedName>
        <fullName>Bifunctional aspartate aminotransferase and L-aspartate beta-decarboxylase</fullName>
        <ecNumber evidence="2">2.6.1.1</ecNumber>
        <ecNumber evidence="2 3">4.1.1.12</ecNumber>
    </recommendedName>
    <alternativeName>
        <fullName>Aspartate 4-decarboxylase</fullName>
        <shortName>Asd</shortName>
        <shortName>AsdP</shortName>
    </alternativeName>
</protein>
<keyword id="KW-0002">3D-structure</keyword>
<keyword id="KW-0028">Amino-acid biosynthesis</keyword>
<keyword id="KW-0032">Aminotransferase</keyword>
<keyword id="KW-0210">Decarboxylase</keyword>
<keyword id="KW-0456">Lyase</keyword>
<keyword id="KW-0663">Pyridoxal phosphate</keyword>
<keyword id="KW-0808">Transferase</keyword>
<feature type="chain" id="PRO_0000419124" description="Bifunctional aspartate aminotransferase and L-aspartate beta-decarboxylase">
    <location>
        <begin position="1"/>
        <end position="531"/>
    </location>
</feature>
<feature type="binding site" evidence="1">
    <location>
        <position position="114"/>
    </location>
    <ligand>
        <name>L-aspartate</name>
        <dbReference type="ChEBI" id="CHEBI:29991"/>
    </ligand>
</feature>
<feature type="binding site" evidence="1">
    <location>
        <position position="255"/>
    </location>
    <ligand>
        <name>L-aspartate</name>
        <dbReference type="ChEBI" id="CHEBI:29991"/>
    </ligand>
</feature>
<feature type="binding site" evidence="1">
    <location>
        <position position="496"/>
    </location>
    <ligand>
        <name>L-aspartate</name>
        <dbReference type="ChEBI" id="CHEBI:29991"/>
    </ligand>
</feature>
<feature type="modified residue" description="N6-(pyridoxal phosphate)lysine" evidence="3 6">
    <location>
        <position position="314"/>
    </location>
</feature>
<feature type="mutagenesis site" description="Loss of activity. Dissociation into dimers." evidence="3">
    <original>SYM</original>
    <variation>EEE</variation>
    <location>
        <begin position="67"/>
        <end position="69"/>
    </location>
</feature>
<feature type="turn" evidence="7">
    <location>
        <begin position="13"/>
        <end position="15"/>
    </location>
</feature>
<feature type="helix" evidence="7">
    <location>
        <begin position="16"/>
        <end position="21"/>
    </location>
</feature>
<feature type="helix" evidence="7">
    <location>
        <begin position="28"/>
        <end position="35"/>
    </location>
</feature>
<feature type="helix" evidence="7">
    <location>
        <begin position="46"/>
        <end position="63"/>
    </location>
</feature>
<feature type="helix" evidence="7">
    <location>
        <begin position="82"/>
        <end position="91"/>
    </location>
</feature>
<feature type="turn" evidence="7">
    <location>
        <begin position="92"/>
        <end position="95"/>
    </location>
</feature>
<feature type="helix" evidence="7">
    <location>
        <begin position="97"/>
        <end position="111"/>
    </location>
</feature>
<feature type="helix" evidence="7">
    <location>
        <begin position="117"/>
        <end position="129"/>
    </location>
</feature>
<feature type="strand" evidence="7">
    <location>
        <begin position="135"/>
        <end position="138"/>
    </location>
</feature>
<feature type="helix" evidence="7">
    <location>
        <begin position="141"/>
        <end position="154"/>
    </location>
</feature>
<feature type="helix" evidence="7">
    <location>
        <begin position="162"/>
        <end position="164"/>
    </location>
</feature>
<feature type="strand" evidence="7">
    <location>
        <begin position="169"/>
        <end position="171"/>
    </location>
</feature>
<feature type="helix" evidence="7">
    <location>
        <begin position="172"/>
        <end position="187"/>
    </location>
</feature>
<feature type="strand" evidence="7">
    <location>
        <begin position="195"/>
        <end position="201"/>
    </location>
</feature>
<feature type="helix" evidence="7">
    <location>
        <begin position="204"/>
        <end position="208"/>
    </location>
</feature>
<feature type="turn" evidence="7">
    <location>
        <begin position="213"/>
        <end position="215"/>
    </location>
</feature>
<feature type="helix" evidence="7">
    <location>
        <begin position="226"/>
        <end position="228"/>
    </location>
</feature>
<feature type="helix" evidence="7">
    <location>
        <begin position="234"/>
        <end position="237"/>
    </location>
</feature>
<feature type="helix" evidence="7">
    <location>
        <begin position="238"/>
        <end position="241"/>
    </location>
</feature>
<feature type="strand" evidence="7">
    <location>
        <begin position="245"/>
        <end position="253"/>
    </location>
</feature>
<feature type="turn" evidence="7">
    <location>
        <begin position="255"/>
        <end position="257"/>
    </location>
</feature>
<feature type="helix" evidence="7">
    <location>
        <begin position="263"/>
        <end position="275"/>
    </location>
</feature>
<feature type="strand" evidence="7">
    <location>
        <begin position="281"/>
        <end position="285"/>
    </location>
</feature>
<feature type="helix" evidence="7">
    <location>
        <begin position="287"/>
        <end position="289"/>
    </location>
</feature>
<feature type="strand" evidence="7">
    <location>
        <begin position="292"/>
        <end position="294"/>
    </location>
</feature>
<feature type="helix" evidence="7">
    <location>
        <begin position="298"/>
        <end position="301"/>
    </location>
</feature>
<feature type="turn" evidence="7">
    <location>
        <begin position="303"/>
        <end position="305"/>
    </location>
</feature>
<feature type="strand" evidence="7">
    <location>
        <begin position="306"/>
        <end position="311"/>
    </location>
</feature>
<feature type="turn" evidence="7">
    <location>
        <begin position="312"/>
        <end position="316"/>
    </location>
</feature>
<feature type="helix" evidence="7">
    <location>
        <begin position="319"/>
        <end position="321"/>
    </location>
</feature>
<feature type="strand" evidence="7">
    <location>
        <begin position="324"/>
        <end position="331"/>
    </location>
</feature>
<feature type="helix" evidence="7">
    <location>
        <begin position="333"/>
        <end position="337"/>
    </location>
</feature>
<feature type="helix" evidence="7">
    <location>
        <begin position="343"/>
        <end position="352"/>
    </location>
</feature>
<feature type="turn" evidence="7">
    <location>
        <begin position="353"/>
        <end position="356"/>
    </location>
</feature>
<feature type="helix" evidence="7">
    <location>
        <begin position="365"/>
        <end position="373"/>
    </location>
</feature>
<feature type="turn" evidence="7">
    <location>
        <begin position="374"/>
        <end position="378"/>
    </location>
</feature>
<feature type="helix" evidence="7">
    <location>
        <begin position="379"/>
        <end position="381"/>
    </location>
</feature>
<feature type="helix" evidence="7">
    <location>
        <begin position="386"/>
        <end position="400"/>
    </location>
</feature>
<feature type="helix" evidence="7">
    <location>
        <begin position="406"/>
        <end position="423"/>
    </location>
</feature>
<feature type="turn" evidence="7">
    <location>
        <begin position="424"/>
        <end position="427"/>
    </location>
</feature>
<feature type="strand" evidence="7">
    <location>
        <begin position="439"/>
        <end position="444"/>
    </location>
</feature>
<feature type="helix" evidence="7">
    <location>
        <begin position="445"/>
        <end position="452"/>
    </location>
</feature>
<feature type="helix" evidence="7">
    <location>
        <begin position="455"/>
        <end position="464"/>
    </location>
</feature>
<feature type="helix" evidence="7">
    <location>
        <begin position="467"/>
        <end position="477"/>
    </location>
</feature>
<feature type="strand" evidence="7">
    <location>
        <begin position="494"/>
        <end position="498"/>
    </location>
</feature>
<feature type="helix" evidence="7">
    <location>
        <begin position="504"/>
        <end position="527"/>
    </location>
</feature>
<feature type="turn" evidence="7">
    <location>
        <begin position="528"/>
        <end position="531"/>
    </location>
</feature>
<organism>
    <name type="scientific">Pseudomonas sp</name>
    <dbReference type="NCBI Taxonomy" id="306"/>
    <lineage>
        <taxon>Bacteria</taxon>
        <taxon>Pseudomonadati</taxon>
        <taxon>Pseudomonadota</taxon>
        <taxon>Gammaproteobacteria</taxon>
        <taxon>Pseudomonadales</taxon>
        <taxon>Pseudomonadaceae</taxon>
        <taxon>Pseudomonas</taxon>
    </lineage>
</organism>
<comment type="function">
    <text evidence="2 3">Bifunctional enzyme that has both L-aspartate decarboxylase and transaminase activity. Has high activity with L-aspartate, and much lower activity with D-aspartate, L-lysine and L-glutamine.</text>
</comment>
<comment type="catalytic activity">
    <reaction evidence="2 3">
        <text>L-aspartate + H(+) = L-alanine + CO2</text>
        <dbReference type="Rhea" id="RHEA:12621"/>
        <dbReference type="ChEBI" id="CHEBI:15378"/>
        <dbReference type="ChEBI" id="CHEBI:16526"/>
        <dbReference type="ChEBI" id="CHEBI:29991"/>
        <dbReference type="ChEBI" id="CHEBI:57972"/>
        <dbReference type="EC" id="4.1.1.12"/>
    </reaction>
</comment>
<comment type="catalytic activity">
    <reaction evidence="2">
        <text>L-aspartate + 2-oxoglutarate = oxaloacetate + L-glutamate</text>
        <dbReference type="Rhea" id="RHEA:21824"/>
        <dbReference type="ChEBI" id="CHEBI:16452"/>
        <dbReference type="ChEBI" id="CHEBI:16810"/>
        <dbReference type="ChEBI" id="CHEBI:29985"/>
        <dbReference type="ChEBI" id="CHEBI:29991"/>
        <dbReference type="EC" id="2.6.1.1"/>
    </reaction>
</comment>
<comment type="cofactor">
    <cofactor evidence="3">
        <name>pyridoxal 5'-phosphate</name>
        <dbReference type="ChEBI" id="CHEBI:597326"/>
    </cofactor>
</comment>
<comment type="activity regulation">
    <text evidence="2">Inhibited by 10 mM Co(2+), Mn(2+) and Ni(2+), and by 1 mM Cu(2+) and Hg(2+).</text>
</comment>
<comment type="biophysicochemical properties">
    <kinetics>
        <KM evidence="2">11 mM for L-aspartate</KM>
    </kinetics>
    <phDependence>
        <text evidence="2">Optimum pH is 5.</text>
    </phDependence>
    <temperatureDependence>
        <text evidence="2">Optimum temperature is 45 degrees Celsius.</text>
    </temperatureDependence>
</comment>
<comment type="subunit">
    <text evidence="2 3">Homododecamer.</text>
</comment>
<comment type="interaction">
    <interactant intactId="EBI-15769000">
        <id>Q53IZ1</id>
    </interactant>
    <interactant intactId="EBI-15769000">
        <id>Q53IZ1</id>
        <label>asD</label>
    </interactant>
    <organismsDiffer>false</organismsDiffer>
    <experiments>2</experiments>
</comment>
<comment type="similarity">
    <text evidence="5">Belongs to the class-I pyridoxal-phosphate-dependent aminotransferase family.</text>
</comment>
<sequence>MSKDYRSLANLSPFELKDELIKVASGKANRLMLNAGRGNPNFLATTPRRAFFRLGLFAAAESELSYSYMTVGVGGLAKLDGIEGRFERFIAEHRDQEGVKFLGKSLSYVRDQLGLDPAAFLHEMVDGILGCNYPVPPRMLTVSEQIVRQYIVREMAGGAVPPESVDLFAVEGGTAAMAYIFESLRISGLLKAGDKVAIGMPVFTPYIEIPELAQYDLKEVPIHADPDNGWQYSDAELDKLKDPDVKIFFCVNPSNPPSVKMDQRSLDRVRAIVAEQRPDLLILTDDVYGTFADEFQSLFSVCPRNTLLVYSFSKYFGATGWRLGVIAAHKDNVFDHALSQLPESAKKALDHRYRSLLPDVRSLKFIDRLVADSRVVALNHTAGLSTPQQVQMVLFSLFALMDEADAYKQALKQLIRRREATLYRELGMPPLENPNSVNYYTLIDLQNVTCRLYGEAFSQWAVQQSSTGDMLFRVADETGIVLLPGRGFGSDRPSGRASLANLNEYEYAAIGRALRRLADELYEQYKALGKE</sequence>
<gene>
    <name evidence="4" type="primary">asD</name>
</gene>